<dbReference type="EMBL" id="AF182040">
    <property type="protein sequence ID" value="AAG16897.1"/>
    <property type="molecule type" value="mRNA"/>
</dbReference>
<dbReference type="EMBL" id="BC010802">
    <property type="protein sequence ID" value="AAH10802.1"/>
    <property type="molecule type" value="mRNA"/>
</dbReference>
<dbReference type="EMBL" id="BC019157">
    <property type="protein sequence ID" value="AAH19157.1"/>
    <property type="molecule type" value="mRNA"/>
</dbReference>
<dbReference type="EMBL" id="BC037667">
    <property type="protein sequence ID" value="AAH37667.2"/>
    <property type="molecule type" value="mRNA"/>
</dbReference>
<dbReference type="CCDS" id="CCDS27563.1"/>
<dbReference type="RefSeq" id="NP_075657.1">
    <property type="nucleotide sequence ID" value="NM_023168.3"/>
</dbReference>
<dbReference type="RefSeq" id="XP_006521312.1">
    <property type="nucleotide sequence ID" value="XM_006521249.4"/>
</dbReference>
<dbReference type="RefSeq" id="XP_006521313.1">
    <property type="nucleotide sequence ID" value="XM_006521250.4"/>
</dbReference>
<dbReference type="RefSeq" id="XP_006521314.1">
    <property type="nucleotide sequence ID" value="XM_006521251.4"/>
</dbReference>
<dbReference type="RefSeq" id="XP_011244011.1">
    <property type="nucleotide sequence ID" value="XM_011245709.3"/>
</dbReference>
<dbReference type="RefSeq" id="XP_030104550.1">
    <property type="nucleotide sequence ID" value="XM_030248690.1"/>
</dbReference>
<dbReference type="SMR" id="Q9ESF4"/>
<dbReference type="FunCoup" id="Q9ESF4">
    <property type="interactions" value="293"/>
</dbReference>
<dbReference type="STRING" id="10090.ENSMUSP00000023225"/>
<dbReference type="PhosphoSitePlus" id="Q9ESF4"/>
<dbReference type="PaxDb" id="10090-ENSMUSP00000023225"/>
<dbReference type="Antibodypedia" id="48337">
    <property type="antibodies" value="185 antibodies from 25 providers"/>
</dbReference>
<dbReference type="DNASU" id="66168"/>
<dbReference type="Ensembl" id="ENSMUST00000023225.8">
    <property type="protein sequence ID" value="ENSMUSP00000023225.7"/>
    <property type="gene ID" value="ENSMUSG00000022564.8"/>
</dbReference>
<dbReference type="GeneID" id="66168"/>
<dbReference type="KEGG" id="mmu:66168"/>
<dbReference type="UCSC" id="uc007wjl.1">
    <property type="organism name" value="mouse"/>
</dbReference>
<dbReference type="AGR" id="MGI:1913418"/>
<dbReference type="CTD" id="2907"/>
<dbReference type="MGI" id="MGI:1913418">
    <property type="gene designation" value="Grina"/>
</dbReference>
<dbReference type="VEuPathDB" id="HostDB:ENSMUSG00000022564"/>
<dbReference type="eggNOG" id="KOG2322">
    <property type="taxonomic scope" value="Eukaryota"/>
</dbReference>
<dbReference type="GeneTree" id="ENSGT01050000244890"/>
<dbReference type="HOGENOM" id="CLU_058671_3_0_1"/>
<dbReference type="InParanoid" id="Q9ESF4"/>
<dbReference type="OMA" id="YYVSYAF"/>
<dbReference type="OrthoDB" id="7933078at2759"/>
<dbReference type="PhylomeDB" id="Q9ESF4"/>
<dbReference type="TreeFam" id="TF319996"/>
<dbReference type="BioGRID-ORCS" id="66168">
    <property type="hits" value="2 hits in 80 CRISPR screens"/>
</dbReference>
<dbReference type="ChiTaRS" id="Grina">
    <property type="organism name" value="mouse"/>
</dbReference>
<dbReference type="PRO" id="PR:Q9ESF4"/>
<dbReference type="Proteomes" id="UP000000589">
    <property type="component" value="Chromosome 15"/>
</dbReference>
<dbReference type="RNAct" id="Q9ESF4">
    <property type="molecule type" value="protein"/>
</dbReference>
<dbReference type="Bgee" id="ENSMUSG00000022564">
    <property type="expression patterns" value="Expressed in granulocyte and 72 other cell types or tissues"/>
</dbReference>
<dbReference type="ExpressionAtlas" id="Q9ESF4">
    <property type="expression patterns" value="baseline and differential"/>
</dbReference>
<dbReference type="GO" id="GO:0005783">
    <property type="term" value="C:endoplasmic reticulum"/>
    <property type="evidence" value="ECO:0000314"/>
    <property type="project" value="MGI"/>
</dbReference>
<dbReference type="GO" id="GO:0005794">
    <property type="term" value="C:Golgi apparatus"/>
    <property type="evidence" value="ECO:0000314"/>
    <property type="project" value="MGI"/>
</dbReference>
<dbReference type="GO" id="GO:0000139">
    <property type="term" value="C:Golgi membrane"/>
    <property type="evidence" value="ECO:0007669"/>
    <property type="project" value="Ensembl"/>
</dbReference>
<dbReference type="GO" id="GO:0044325">
    <property type="term" value="F:transmembrane transporter binding"/>
    <property type="evidence" value="ECO:0000314"/>
    <property type="project" value="MGI"/>
</dbReference>
<dbReference type="GO" id="GO:0032469">
    <property type="term" value="P:endoplasmic reticulum calcium ion homeostasis"/>
    <property type="evidence" value="ECO:0000314"/>
    <property type="project" value="MGI"/>
</dbReference>
<dbReference type="GO" id="GO:1902236">
    <property type="term" value="P:negative regulation of endoplasmic reticulum stress-induced intrinsic apoptotic signaling pathway"/>
    <property type="evidence" value="ECO:0000314"/>
    <property type="project" value="MGI"/>
</dbReference>
<dbReference type="CDD" id="cd10428">
    <property type="entry name" value="LFG_like"/>
    <property type="match status" value="1"/>
</dbReference>
<dbReference type="InterPro" id="IPR006214">
    <property type="entry name" value="Bax_inhibitor_1-related"/>
</dbReference>
<dbReference type="PANTHER" id="PTHR23291">
    <property type="entry name" value="BAX INHIBITOR-RELATED"/>
    <property type="match status" value="1"/>
</dbReference>
<dbReference type="PANTHER" id="PTHR23291:SF16">
    <property type="entry name" value="PROTEIN LIFEGUARD 1"/>
    <property type="match status" value="1"/>
</dbReference>
<dbReference type="Pfam" id="PF01027">
    <property type="entry name" value="Bax1-I"/>
    <property type="match status" value="1"/>
</dbReference>
<feature type="chain" id="PRO_0000314440" description="Protein lifeguard 1">
    <location>
        <begin position="1"/>
        <end position="345"/>
    </location>
</feature>
<feature type="transmembrane region" description="Helical" evidence="2">
    <location>
        <begin position="139"/>
        <end position="159"/>
    </location>
</feature>
<feature type="transmembrane region" description="Helical" evidence="2">
    <location>
        <begin position="171"/>
        <end position="191"/>
    </location>
</feature>
<feature type="transmembrane region" description="Helical" evidence="2">
    <location>
        <begin position="202"/>
        <end position="222"/>
    </location>
</feature>
<feature type="transmembrane region" description="Helical" evidence="2">
    <location>
        <begin position="227"/>
        <end position="247"/>
    </location>
</feature>
<feature type="transmembrane region" description="Helical" evidence="2">
    <location>
        <begin position="257"/>
        <end position="277"/>
    </location>
</feature>
<feature type="transmembrane region" description="Helical" evidence="2">
    <location>
        <begin position="281"/>
        <end position="301"/>
    </location>
</feature>
<feature type="transmembrane region" description="Helical" evidence="2">
    <location>
        <begin position="320"/>
        <end position="340"/>
    </location>
</feature>
<feature type="region of interest" description="Disordered" evidence="3">
    <location>
        <begin position="1"/>
        <end position="115"/>
    </location>
</feature>
<feature type="compositionally biased region" description="Pro residues" evidence="3">
    <location>
        <begin position="24"/>
        <end position="46"/>
    </location>
</feature>
<feature type="compositionally biased region" description="Pro residues" evidence="3">
    <location>
        <begin position="79"/>
        <end position="98"/>
    </location>
</feature>
<organism>
    <name type="scientific">Mus musculus</name>
    <name type="common">Mouse</name>
    <dbReference type="NCBI Taxonomy" id="10090"/>
    <lineage>
        <taxon>Eukaryota</taxon>
        <taxon>Metazoa</taxon>
        <taxon>Chordata</taxon>
        <taxon>Craniata</taxon>
        <taxon>Vertebrata</taxon>
        <taxon>Euteleostomi</taxon>
        <taxon>Mammalia</taxon>
        <taxon>Eutheria</taxon>
        <taxon>Euarchontoglires</taxon>
        <taxon>Glires</taxon>
        <taxon>Rodentia</taxon>
        <taxon>Myomorpha</taxon>
        <taxon>Muroidea</taxon>
        <taxon>Muridae</taxon>
        <taxon>Murinae</taxon>
        <taxon>Mus</taxon>
        <taxon>Mus</taxon>
    </lineage>
</organism>
<proteinExistence type="evidence at transcript level"/>
<sequence length="345" mass="38408">MSHEKSFLVSGDSYPPQNIVGPQAPMPPYVQAPYPGAPYPQAPFQPSPYGQPGYPHGPSPYPQGGYPQGPYPQGGYPQGPYPQSPFPPNPYGQPPPFQDPGSPQHGNYQEEGPPSYYDNQDFPAVNWDKNIRQAFIRKVFLVLTLQLSVTLSTVAIFTFVGEVKGFVRENVWTYYVSYAIFFISLIVLSCCGDFRRKHPWNLVALSILTVSLSYMVGMIASFYNTEAVIMAVGITTAVCFTVVIFSMQTRYDFTSCMGVLLVSVVVLFIFAILCIFIRNRILEIVYASLGALLFTCFLAVDTQLLLGNKQLSLSPEEYVFAALNLYTDIINIFLYILTIIGRAKE</sequence>
<keyword id="KW-0472">Membrane</keyword>
<keyword id="KW-1185">Reference proteome</keyword>
<keyword id="KW-0812">Transmembrane</keyword>
<keyword id="KW-1133">Transmembrane helix</keyword>
<name>LFG1_MOUSE</name>
<evidence type="ECO:0000250" key="1"/>
<evidence type="ECO:0000255" key="2"/>
<evidence type="ECO:0000256" key="3">
    <source>
        <dbReference type="SAM" id="MobiDB-lite"/>
    </source>
</evidence>
<evidence type="ECO:0000305" key="4"/>
<protein>
    <recommendedName>
        <fullName>Protein lifeguard 1</fullName>
    </recommendedName>
    <alternativeName>
        <fullName>Glutamate [NMDA] receptor-associated protein 1</fullName>
    </alternativeName>
    <alternativeName>
        <fullName>NMDA receptor glutamate-binding subunit</fullName>
    </alternativeName>
</protein>
<comment type="function">
    <text evidence="1">Potential apoptotic regulator.</text>
</comment>
<comment type="subcellular location">
    <subcellularLocation>
        <location evidence="4">Membrane</location>
        <topology evidence="4">Multi-pass membrane protein</topology>
    </subcellularLocation>
</comment>
<comment type="similarity">
    <text evidence="4">Belongs to the BI1 family. LFG subfamily.</text>
</comment>
<reference key="1">
    <citation type="submission" date="1999-09" db="EMBL/GenBank/DDBJ databases">
        <title>Identification and phylogeny of a novel family of eukaryotic membrane proteins related to a glutamate binding protein (GBP).</title>
        <authorList>
            <person name="Goldberger O."/>
            <person name="Smith T."/>
            <person name="Minta J."/>
            <person name="Goldberger G."/>
        </authorList>
    </citation>
    <scope>NUCLEOTIDE SEQUENCE [MRNA]</scope>
</reference>
<reference key="2">
    <citation type="journal article" date="2004" name="Genome Res.">
        <title>The status, quality, and expansion of the NIH full-length cDNA project: the Mammalian Gene Collection (MGC).</title>
        <authorList>
            <consortium name="The MGC Project Team"/>
        </authorList>
    </citation>
    <scope>NUCLEOTIDE SEQUENCE [LARGE SCALE MRNA]</scope>
    <source>
        <strain>FVB/N</strain>
        <strain>FVB/N-3</strain>
        <strain>NMRI</strain>
        <tissue>Kidney</tissue>
        <tissue>Mammary tumor</tissue>
    </source>
</reference>
<reference key="3">
    <citation type="journal article" date="2009" name="Apoptosis">
        <title>LFG: a candidate apoptosis regulatory gene family.</title>
        <authorList>
            <person name="Hu L."/>
            <person name="Smith T.F."/>
            <person name="Goldberger G."/>
        </authorList>
    </citation>
    <scope>GENE FAMILY</scope>
    <scope>NOMENCLATURE</scope>
</reference>
<gene>
    <name type="primary">Grina</name>
    <name type="synonym">Lag</name>
    <name type="synonym">Lfg1</name>
    <name type="synonym">Nmdara1</name>
</gene>
<accession>Q9ESF4</accession>
<accession>Q8CI25</accession>